<dbReference type="EMBL" id="CP000051">
    <property type="protein sequence ID" value="AAX50957.1"/>
    <property type="molecule type" value="Genomic_DNA"/>
</dbReference>
<dbReference type="RefSeq" id="WP_011324821.1">
    <property type="nucleotide sequence ID" value="NC_007429.1"/>
</dbReference>
<dbReference type="SMR" id="Q3KL15"/>
<dbReference type="KEGG" id="cta:CTA_0739"/>
<dbReference type="HOGENOM" id="CLU_047155_0_0_0"/>
<dbReference type="Proteomes" id="UP000002532">
    <property type="component" value="Chromosome"/>
</dbReference>
<dbReference type="GO" id="GO:0005737">
    <property type="term" value="C:cytoplasm"/>
    <property type="evidence" value="ECO:0007669"/>
    <property type="project" value="UniProtKB-SubCell"/>
</dbReference>
<dbReference type="GO" id="GO:0003746">
    <property type="term" value="F:translation elongation factor activity"/>
    <property type="evidence" value="ECO:0007669"/>
    <property type="project" value="UniProtKB-UniRule"/>
</dbReference>
<dbReference type="CDD" id="cd14275">
    <property type="entry name" value="UBA_EF-Ts"/>
    <property type="match status" value="1"/>
</dbReference>
<dbReference type="FunFam" id="1.10.286.20:FF:000001">
    <property type="entry name" value="Elongation factor Ts"/>
    <property type="match status" value="1"/>
</dbReference>
<dbReference type="FunFam" id="1.10.8.10:FF:000130">
    <property type="entry name" value="Elongation factor Ts"/>
    <property type="match status" value="1"/>
</dbReference>
<dbReference type="Gene3D" id="1.10.286.20">
    <property type="match status" value="1"/>
</dbReference>
<dbReference type="Gene3D" id="1.10.8.10">
    <property type="entry name" value="DNA helicase RuvA subunit, C-terminal domain"/>
    <property type="match status" value="1"/>
</dbReference>
<dbReference type="Gene3D" id="3.30.479.20">
    <property type="entry name" value="Elongation factor Ts, dimerisation domain"/>
    <property type="match status" value="2"/>
</dbReference>
<dbReference type="HAMAP" id="MF_00050">
    <property type="entry name" value="EF_Ts"/>
    <property type="match status" value="1"/>
</dbReference>
<dbReference type="InterPro" id="IPR036402">
    <property type="entry name" value="EF-Ts_dimer_sf"/>
</dbReference>
<dbReference type="InterPro" id="IPR001816">
    <property type="entry name" value="Transl_elong_EFTs/EF1B"/>
</dbReference>
<dbReference type="InterPro" id="IPR014039">
    <property type="entry name" value="Transl_elong_EFTs/EF1B_dimer"/>
</dbReference>
<dbReference type="InterPro" id="IPR018101">
    <property type="entry name" value="Transl_elong_Ts_CS"/>
</dbReference>
<dbReference type="InterPro" id="IPR009060">
    <property type="entry name" value="UBA-like_sf"/>
</dbReference>
<dbReference type="NCBIfam" id="TIGR00116">
    <property type="entry name" value="tsf"/>
    <property type="match status" value="1"/>
</dbReference>
<dbReference type="PANTHER" id="PTHR11741">
    <property type="entry name" value="ELONGATION FACTOR TS"/>
    <property type="match status" value="1"/>
</dbReference>
<dbReference type="PANTHER" id="PTHR11741:SF0">
    <property type="entry name" value="ELONGATION FACTOR TS, MITOCHONDRIAL"/>
    <property type="match status" value="1"/>
</dbReference>
<dbReference type="Pfam" id="PF00889">
    <property type="entry name" value="EF_TS"/>
    <property type="match status" value="1"/>
</dbReference>
<dbReference type="SUPFAM" id="SSF54713">
    <property type="entry name" value="Elongation factor Ts (EF-Ts), dimerisation domain"/>
    <property type="match status" value="1"/>
</dbReference>
<dbReference type="SUPFAM" id="SSF46934">
    <property type="entry name" value="UBA-like"/>
    <property type="match status" value="1"/>
</dbReference>
<dbReference type="PROSITE" id="PS01126">
    <property type="entry name" value="EF_TS_1"/>
    <property type="match status" value="1"/>
</dbReference>
<dbReference type="PROSITE" id="PS01127">
    <property type="entry name" value="EF_TS_2"/>
    <property type="match status" value="1"/>
</dbReference>
<evidence type="ECO:0000255" key="1">
    <source>
        <dbReference type="HAMAP-Rule" id="MF_00050"/>
    </source>
</evidence>
<proteinExistence type="inferred from homology"/>
<keyword id="KW-0963">Cytoplasm</keyword>
<keyword id="KW-0251">Elongation factor</keyword>
<keyword id="KW-0648">Protein biosynthesis</keyword>
<organism>
    <name type="scientific">Chlamydia trachomatis serovar A (strain ATCC VR-571B / DSM 19440 / HAR-13)</name>
    <dbReference type="NCBI Taxonomy" id="315277"/>
    <lineage>
        <taxon>Bacteria</taxon>
        <taxon>Pseudomonadati</taxon>
        <taxon>Chlamydiota</taxon>
        <taxon>Chlamydiia</taxon>
        <taxon>Chlamydiales</taxon>
        <taxon>Chlamydiaceae</taxon>
        <taxon>Chlamydia/Chlamydophila group</taxon>
        <taxon>Chlamydia</taxon>
    </lineage>
</organism>
<reference key="1">
    <citation type="journal article" date="2005" name="Infect. Immun.">
        <title>Comparative genomic analysis of Chlamydia trachomatis oculotropic and genitotropic strains.</title>
        <authorList>
            <person name="Carlson J.H."/>
            <person name="Porcella S.F."/>
            <person name="McClarty G."/>
            <person name="Caldwell H.D."/>
        </authorList>
    </citation>
    <scope>NUCLEOTIDE SEQUENCE [LARGE SCALE GENOMIC DNA]</scope>
    <source>
        <strain>ATCC VR-571B / DSM 19440 / HAR-13</strain>
    </source>
</reference>
<protein>
    <recommendedName>
        <fullName evidence="1">Elongation factor Ts</fullName>
        <shortName evidence="1">EF-Ts</shortName>
    </recommendedName>
</protein>
<accession>Q3KL15</accession>
<feature type="chain" id="PRO_0000241471" description="Elongation factor Ts">
    <location>
        <begin position="1"/>
        <end position="282"/>
    </location>
</feature>
<feature type="region of interest" description="Involved in Mg(2+) ion dislocation from EF-Tu" evidence="1">
    <location>
        <begin position="80"/>
        <end position="83"/>
    </location>
</feature>
<name>EFTS_CHLTA</name>
<comment type="function">
    <text evidence="1">Associates with the EF-Tu.GDP complex and induces the exchange of GDP to GTP. It remains bound to the aminoacyl-tRNA.EF-Tu.GTP complex up to the GTP hydrolysis stage on the ribosome.</text>
</comment>
<comment type="subcellular location">
    <subcellularLocation>
        <location evidence="1">Cytoplasm</location>
    </subcellularLocation>
</comment>
<comment type="similarity">
    <text evidence="1">Belongs to the EF-Ts family.</text>
</comment>
<gene>
    <name evidence="1" type="primary">tsf</name>
    <name type="ordered locus">CTA_0739</name>
</gene>
<sequence length="282" mass="30797">MSDFSMETLKNLRQQTGVGLTKCKEALEHAKGNLEDAVVYLRKLGLASAGKKEHRETKEGVIAALVDERGAALVEVNVETDFVANNSVFRAFVTGLLSDLLDHKLSDVEALARVMSSQEPSLSVEELKAVTMQTVGENIRISRALYTPVSSGQSVGIYSHGNGKAVAMVFLSGSENQEALAKDIAMHIVASQPQFLSKDSVPQEVLEREREVFSSQVAGKLQEVVEKITQGKFKAFFQEACLLEQAFIKDPEVTIQGLIDRAAKASGEPLKVEHFVFWKMGA</sequence>